<accession>Q5H188</accession>
<gene>
    <name evidence="1" type="primary">hrcA</name>
    <name type="ordered locus">XOO2029</name>
</gene>
<comment type="function">
    <text evidence="1">Negative regulator of class I heat shock genes (grpE-dnaK-dnaJ and groELS operons). Prevents heat-shock induction of these operons.</text>
</comment>
<comment type="similarity">
    <text evidence="1">Belongs to the HrcA family.</text>
</comment>
<evidence type="ECO:0000255" key="1">
    <source>
        <dbReference type="HAMAP-Rule" id="MF_00081"/>
    </source>
</evidence>
<sequence length="350" mass="38354">MRASQSPMLDPRTRQLLRTLIARYIRDGEPVGSKTLAQHAGLDVSPATIRNILADLEDVGLLSSPHTSAGRVPTAHGYRVFVDSLVQMQPPGEEEVRRLRAELASGNGTQSLLGSASQMLSAMSHFVGVVSAPRREQFAFRHIDFVALDARRVLAILVFADNEVQNRVIEPRRAYEPAELERVANYLNAQFAGRALADIRACLLRELRMAKNEMEQLLAHSVDLASEALVPADADDMVMAGQTRLMGVQDLSDLDRLRELFEVFASKREILQLLERTIQAPGVRIFIGEETGMVSLEDVSLVTAPYTAHGQVLGVLGVIGPKRMAYDRLIPLVQTAADVLGAAMESPGTR</sequence>
<organism>
    <name type="scientific">Xanthomonas oryzae pv. oryzae (strain KACC10331 / KXO85)</name>
    <dbReference type="NCBI Taxonomy" id="291331"/>
    <lineage>
        <taxon>Bacteria</taxon>
        <taxon>Pseudomonadati</taxon>
        <taxon>Pseudomonadota</taxon>
        <taxon>Gammaproteobacteria</taxon>
        <taxon>Lysobacterales</taxon>
        <taxon>Lysobacteraceae</taxon>
        <taxon>Xanthomonas</taxon>
    </lineage>
</organism>
<keyword id="KW-1185">Reference proteome</keyword>
<keyword id="KW-0678">Repressor</keyword>
<keyword id="KW-0346">Stress response</keyword>
<keyword id="KW-0804">Transcription</keyword>
<keyword id="KW-0805">Transcription regulation</keyword>
<reference key="1">
    <citation type="journal article" date="2005" name="Nucleic Acids Res.">
        <title>The genome sequence of Xanthomonas oryzae pathovar oryzae KACC10331, the bacterial blight pathogen of rice.</title>
        <authorList>
            <person name="Lee B.-M."/>
            <person name="Park Y.-J."/>
            <person name="Park D.-S."/>
            <person name="Kang H.-W."/>
            <person name="Kim J.-G."/>
            <person name="Song E.-S."/>
            <person name="Park I.-C."/>
            <person name="Yoon U.-H."/>
            <person name="Hahn J.-H."/>
            <person name="Koo B.-S."/>
            <person name="Lee G.-B."/>
            <person name="Kim H."/>
            <person name="Park H.-S."/>
            <person name="Yoon K.-O."/>
            <person name="Kim J.-H."/>
            <person name="Jung C.-H."/>
            <person name="Koh N.-H."/>
            <person name="Seo J.-S."/>
            <person name="Go S.-J."/>
        </authorList>
    </citation>
    <scope>NUCLEOTIDE SEQUENCE [LARGE SCALE GENOMIC DNA]</scope>
    <source>
        <strain>KACC10331 / KXO85</strain>
    </source>
</reference>
<proteinExistence type="inferred from homology"/>
<protein>
    <recommendedName>
        <fullName evidence="1">Heat-inducible transcription repressor HrcA</fullName>
    </recommendedName>
</protein>
<dbReference type="EMBL" id="AE013598">
    <property type="protein sequence ID" value="AAW75283.1"/>
    <property type="molecule type" value="Genomic_DNA"/>
</dbReference>
<dbReference type="SMR" id="Q5H188"/>
<dbReference type="STRING" id="291331.XOO2029"/>
<dbReference type="KEGG" id="xoo:XOO2029"/>
<dbReference type="HOGENOM" id="CLU_050019_0_0_6"/>
<dbReference type="Proteomes" id="UP000006735">
    <property type="component" value="Chromosome"/>
</dbReference>
<dbReference type="GO" id="GO:0003677">
    <property type="term" value="F:DNA binding"/>
    <property type="evidence" value="ECO:0007669"/>
    <property type="project" value="InterPro"/>
</dbReference>
<dbReference type="GO" id="GO:0045892">
    <property type="term" value="P:negative regulation of DNA-templated transcription"/>
    <property type="evidence" value="ECO:0007669"/>
    <property type="project" value="UniProtKB-UniRule"/>
</dbReference>
<dbReference type="FunFam" id="3.30.390.60:FF:000007">
    <property type="entry name" value="Heat-inducible transcription repressor HrcA"/>
    <property type="match status" value="1"/>
</dbReference>
<dbReference type="Gene3D" id="3.30.450.40">
    <property type="match status" value="1"/>
</dbReference>
<dbReference type="Gene3D" id="3.30.390.60">
    <property type="entry name" value="Heat-inducible transcription repressor hrca homolog, domain 3"/>
    <property type="match status" value="1"/>
</dbReference>
<dbReference type="Gene3D" id="1.10.10.10">
    <property type="entry name" value="Winged helix-like DNA-binding domain superfamily/Winged helix DNA-binding domain"/>
    <property type="match status" value="1"/>
</dbReference>
<dbReference type="HAMAP" id="MF_00081">
    <property type="entry name" value="HrcA"/>
    <property type="match status" value="1"/>
</dbReference>
<dbReference type="InterPro" id="IPR029016">
    <property type="entry name" value="GAF-like_dom_sf"/>
</dbReference>
<dbReference type="InterPro" id="IPR002571">
    <property type="entry name" value="HrcA"/>
</dbReference>
<dbReference type="InterPro" id="IPR021153">
    <property type="entry name" value="HrcA_C"/>
</dbReference>
<dbReference type="InterPro" id="IPR036388">
    <property type="entry name" value="WH-like_DNA-bd_sf"/>
</dbReference>
<dbReference type="InterPro" id="IPR036390">
    <property type="entry name" value="WH_DNA-bd_sf"/>
</dbReference>
<dbReference type="InterPro" id="IPR005104">
    <property type="entry name" value="WHTH_HrcA_DNA-bd"/>
</dbReference>
<dbReference type="InterPro" id="IPR023120">
    <property type="entry name" value="WHTH_transcript_rep_HrcA_IDD"/>
</dbReference>
<dbReference type="NCBIfam" id="TIGR00331">
    <property type="entry name" value="hrcA"/>
    <property type="match status" value="1"/>
</dbReference>
<dbReference type="PANTHER" id="PTHR34824">
    <property type="entry name" value="HEAT-INDUCIBLE TRANSCRIPTION REPRESSOR HRCA"/>
    <property type="match status" value="1"/>
</dbReference>
<dbReference type="PANTHER" id="PTHR34824:SF1">
    <property type="entry name" value="HEAT-INDUCIBLE TRANSCRIPTION REPRESSOR HRCA"/>
    <property type="match status" value="1"/>
</dbReference>
<dbReference type="Pfam" id="PF01628">
    <property type="entry name" value="HrcA"/>
    <property type="match status" value="1"/>
</dbReference>
<dbReference type="Pfam" id="PF03444">
    <property type="entry name" value="HrcA_DNA-bdg"/>
    <property type="match status" value="1"/>
</dbReference>
<dbReference type="PIRSF" id="PIRSF005485">
    <property type="entry name" value="HrcA"/>
    <property type="match status" value="1"/>
</dbReference>
<dbReference type="SUPFAM" id="SSF55781">
    <property type="entry name" value="GAF domain-like"/>
    <property type="match status" value="1"/>
</dbReference>
<dbReference type="SUPFAM" id="SSF46785">
    <property type="entry name" value="Winged helix' DNA-binding domain"/>
    <property type="match status" value="1"/>
</dbReference>
<name>HRCA_XANOR</name>
<feature type="chain" id="PRO_1000010479" description="Heat-inducible transcription repressor HrcA">
    <location>
        <begin position="1"/>
        <end position="350"/>
    </location>
</feature>